<protein>
    <recommendedName>
        <fullName evidence="1">Glutamyl-tRNA reductase</fullName>
        <shortName evidence="1">GluTR</shortName>
        <ecNumber evidence="1">1.2.1.70</ecNumber>
    </recommendedName>
</protein>
<dbReference type="EC" id="1.2.1.70" evidence="1"/>
<dbReference type="EMBL" id="CP000308">
    <property type="protein sequence ID" value="ABG13367.1"/>
    <property type="status" value="ALT_INIT"/>
    <property type="molecule type" value="Genomic_DNA"/>
</dbReference>
<dbReference type="RefSeq" id="WP_002211237.1">
    <property type="nucleotide sequence ID" value="NZ_CP009906.1"/>
</dbReference>
<dbReference type="SMR" id="Q1C855"/>
<dbReference type="GeneID" id="57976645"/>
<dbReference type="KEGG" id="ypa:YPA_1400"/>
<dbReference type="UniPathway" id="UPA00251">
    <property type="reaction ID" value="UER00316"/>
</dbReference>
<dbReference type="Proteomes" id="UP000001971">
    <property type="component" value="Chromosome"/>
</dbReference>
<dbReference type="GO" id="GO:0008883">
    <property type="term" value="F:glutamyl-tRNA reductase activity"/>
    <property type="evidence" value="ECO:0007669"/>
    <property type="project" value="UniProtKB-UniRule"/>
</dbReference>
<dbReference type="GO" id="GO:0050661">
    <property type="term" value="F:NADP binding"/>
    <property type="evidence" value="ECO:0007669"/>
    <property type="project" value="InterPro"/>
</dbReference>
<dbReference type="GO" id="GO:0019353">
    <property type="term" value="P:protoporphyrinogen IX biosynthetic process from glutamate"/>
    <property type="evidence" value="ECO:0007669"/>
    <property type="project" value="TreeGrafter"/>
</dbReference>
<dbReference type="CDD" id="cd05213">
    <property type="entry name" value="NAD_bind_Glutamyl_tRNA_reduct"/>
    <property type="match status" value="1"/>
</dbReference>
<dbReference type="FunFam" id="3.30.460.30:FF:000001">
    <property type="entry name" value="Glutamyl-tRNA reductase"/>
    <property type="match status" value="1"/>
</dbReference>
<dbReference type="FunFam" id="3.40.50.720:FF:000031">
    <property type="entry name" value="Glutamyl-tRNA reductase"/>
    <property type="match status" value="1"/>
</dbReference>
<dbReference type="Gene3D" id="3.30.460.30">
    <property type="entry name" value="Glutamyl-tRNA reductase, N-terminal domain"/>
    <property type="match status" value="1"/>
</dbReference>
<dbReference type="Gene3D" id="3.40.50.720">
    <property type="entry name" value="NAD(P)-binding Rossmann-like Domain"/>
    <property type="match status" value="1"/>
</dbReference>
<dbReference type="HAMAP" id="MF_00087">
    <property type="entry name" value="Glu_tRNA_reductase"/>
    <property type="match status" value="1"/>
</dbReference>
<dbReference type="InterPro" id="IPR000343">
    <property type="entry name" value="4pyrrol_synth_GluRdtase"/>
</dbReference>
<dbReference type="InterPro" id="IPR015896">
    <property type="entry name" value="4pyrrol_synth_GluRdtase_dimer"/>
</dbReference>
<dbReference type="InterPro" id="IPR015895">
    <property type="entry name" value="4pyrrol_synth_GluRdtase_N"/>
</dbReference>
<dbReference type="InterPro" id="IPR018214">
    <property type="entry name" value="GluRdtase_CS"/>
</dbReference>
<dbReference type="InterPro" id="IPR036453">
    <property type="entry name" value="GluRdtase_dimer_dom_sf"/>
</dbReference>
<dbReference type="InterPro" id="IPR036343">
    <property type="entry name" value="GluRdtase_N_sf"/>
</dbReference>
<dbReference type="InterPro" id="IPR036291">
    <property type="entry name" value="NAD(P)-bd_dom_sf"/>
</dbReference>
<dbReference type="InterPro" id="IPR006151">
    <property type="entry name" value="Shikm_DH/Glu-tRNA_Rdtase"/>
</dbReference>
<dbReference type="NCBIfam" id="TIGR01035">
    <property type="entry name" value="hemA"/>
    <property type="match status" value="1"/>
</dbReference>
<dbReference type="PANTHER" id="PTHR43013">
    <property type="entry name" value="GLUTAMYL-TRNA REDUCTASE"/>
    <property type="match status" value="1"/>
</dbReference>
<dbReference type="PANTHER" id="PTHR43013:SF1">
    <property type="entry name" value="GLUTAMYL-TRNA REDUCTASE"/>
    <property type="match status" value="1"/>
</dbReference>
<dbReference type="Pfam" id="PF00745">
    <property type="entry name" value="GlutR_dimer"/>
    <property type="match status" value="1"/>
</dbReference>
<dbReference type="Pfam" id="PF05201">
    <property type="entry name" value="GlutR_N"/>
    <property type="match status" value="1"/>
</dbReference>
<dbReference type="Pfam" id="PF01488">
    <property type="entry name" value="Shikimate_DH"/>
    <property type="match status" value="1"/>
</dbReference>
<dbReference type="PIRSF" id="PIRSF000445">
    <property type="entry name" value="4pyrrol_synth_GluRdtase"/>
    <property type="match status" value="1"/>
</dbReference>
<dbReference type="SUPFAM" id="SSF69742">
    <property type="entry name" value="Glutamyl tRNA-reductase catalytic, N-terminal domain"/>
    <property type="match status" value="1"/>
</dbReference>
<dbReference type="SUPFAM" id="SSF69075">
    <property type="entry name" value="Glutamyl tRNA-reductase dimerization domain"/>
    <property type="match status" value="1"/>
</dbReference>
<dbReference type="SUPFAM" id="SSF51735">
    <property type="entry name" value="NAD(P)-binding Rossmann-fold domains"/>
    <property type="match status" value="1"/>
</dbReference>
<dbReference type="PROSITE" id="PS00747">
    <property type="entry name" value="GLUTR"/>
    <property type="match status" value="1"/>
</dbReference>
<feature type="chain" id="PRO_0000335082" description="Glutamyl-tRNA reductase">
    <location>
        <begin position="1"/>
        <end position="420"/>
    </location>
</feature>
<feature type="active site" description="Nucleophile" evidence="1">
    <location>
        <position position="50"/>
    </location>
</feature>
<feature type="binding site" evidence="1">
    <location>
        <begin position="49"/>
        <end position="52"/>
    </location>
    <ligand>
        <name>substrate</name>
    </ligand>
</feature>
<feature type="binding site" evidence="1">
    <location>
        <position position="109"/>
    </location>
    <ligand>
        <name>substrate</name>
    </ligand>
</feature>
<feature type="binding site" evidence="1">
    <location>
        <begin position="114"/>
        <end position="116"/>
    </location>
    <ligand>
        <name>substrate</name>
    </ligand>
</feature>
<feature type="binding site" evidence="1">
    <location>
        <position position="120"/>
    </location>
    <ligand>
        <name>substrate</name>
    </ligand>
</feature>
<feature type="binding site" evidence="1">
    <location>
        <begin position="189"/>
        <end position="194"/>
    </location>
    <ligand>
        <name>NADP(+)</name>
        <dbReference type="ChEBI" id="CHEBI:58349"/>
    </ligand>
</feature>
<feature type="site" description="Important for activity" evidence="1">
    <location>
        <position position="99"/>
    </location>
</feature>
<proteinExistence type="inferred from homology"/>
<gene>
    <name evidence="1" type="primary">hemA</name>
    <name type="ordered locus">YPA_1400</name>
</gene>
<comment type="function">
    <text evidence="1">Catalyzes the NADPH-dependent reduction of glutamyl-tRNA(Glu) to glutamate 1-semialdehyde (GSA).</text>
</comment>
<comment type="catalytic activity">
    <reaction evidence="1">
        <text>(S)-4-amino-5-oxopentanoate + tRNA(Glu) + NADP(+) = L-glutamyl-tRNA(Glu) + NADPH + H(+)</text>
        <dbReference type="Rhea" id="RHEA:12344"/>
        <dbReference type="Rhea" id="RHEA-COMP:9663"/>
        <dbReference type="Rhea" id="RHEA-COMP:9680"/>
        <dbReference type="ChEBI" id="CHEBI:15378"/>
        <dbReference type="ChEBI" id="CHEBI:57501"/>
        <dbReference type="ChEBI" id="CHEBI:57783"/>
        <dbReference type="ChEBI" id="CHEBI:58349"/>
        <dbReference type="ChEBI" id="CHEBI:78442"/>
        <dbReference type="ChEBI" id="CHEBI:78520"/>
        <dbReference type="EC" id="1.2.1.70"/>
    </reaction>
</comment>
<comment type="pathway">
    <text evidence="1">Porphyrin-containing compound metabolism; protoporphyrin-IX biosynthesis; 5-aminolevulinate from L-glutamyl-tRNA(Glu): step 1/2.</text>
</comment>
<comment type="subunit">
    <text evidence="1">Homodimer.</text>
</comment>
<comment type="domain">
    <text evidence="1">Possesses an unusual extended V-shaped dimeric structure with each monomer consisting of three distinct domains arranged along a curved 'spinal' alpha-helix. The N-terminal catalytic domain specifically recognizes the glutamate moiety of the substrate. The second domain is the NADPH-binding domain, and the third C-terminal domain is responsible for dimerization.</text>
</comment>
<comment type="miscellaneous">
    <text evidence="1">During catalysis, the active site Cys acts as a nucleophile attacking the alpha-carbonyl group of tRNA-bound glutamate with the formation of a thioester intermediate between enzyme and glutamate, and the concomitant release of tRNA(Glu). The thioester intermediate is finally reduced by direct hydride transfer from NADPH, to form the product GSA.</text>
</comment>
<comment type="similarity">
    <text evidence="1">Belongs to the glutamyl-tRNA reductase family.</text>
</comment>
<comment type="sequence caution" evidence="2">
    <conflict type="erroneous initiation">
        <sequence resource="EMBL-CDS" id="ABG13367"/>
    </conflict>
</comment>
<keyword id="KW-0521">NADP</keyword>
<keyword id="KW-0560">Oxidoreductase</keyword>
<keyword id="KW-0627">Porphyrin biosynthesis</keyword>
<reference key="1">
    <citation type="journal article" date="2006" name="J. Bacteriol.">
        <title>Complete genome sequence of Yersinia pestis strains Antiqua and Nepal516: evidence of gene reduction in an emerging pathogen.</title>
        <authorList>
            <person name="Chain P.S.G."/>
            <person name="Hu P."/>
            <person name="Malfatti S.A."/>
            <person name="Radnedge L."/>
            <person name="Larimer F."/>
            <person name="Vergez L.M."/>
            <person name="Worsham P."/>
            <person name="Chu M.C."/>
            <person name="Andersen G.L."/>
        </authorList>
    </citation>
    <scope>NUCLEOTIDE SEQUENCE [LARGE SCALE GENOMIC DNA]</scope>
    <source>
        <strain>Antiqua</strain>
    </source>
</reference>
<accession>Q1C855</accession>
<name>HEM1_YERPA</name>
<evidence type="ECO:0000255" key="1">
    <source>
        <dbReference type="HAMAP-Rule" id="MF_00087"/>
    </source>
</evidence>
<evidence type="ECO:0000305" key="2"/>
<sequence>MTLLALGINHKTAPVSLRERVTFSPESMDQALNSLLQQPLVQGGVVLSTCNRTELYLSVEQQENLHEQLTAWLCNYHKLSPDDVRQSLYWHHGNDAVRHLMRVASGLDSQVLGEPQILGQVKKAFAESQRGQSLSSELERLFQKSFSVAKRVRTETEIGASAVSVAFAACSLARQIFESLSELHVLLVGAGETIELVARHLREHQVKHMIIANRTRERAQSLASEVGAEVITLPEIDARLADADIIISSTASPLPIIGKGMVERALKTRRNQPMLFIDIAVPRDIEPEVGKLSNAYLYSVDDLQAIIQHNMAQRQAAAVQAESIVQQESMNFMTWLRAQGAVETIRDYRSQAEQVRSEMTAKALVAIEQGANVEQVINELAYKLTNRLIHAPTKSLQQAASDGDMERLQLLRDSLGLDQH</sequence>
<organism>
    <name type="scientific">Yersinia pestis bv. Antiqua (strain Antiqua)</name>
    <dbReference type="NCBI Taxonomy" id="360102"/>
    <lineage>
        <taxon>Bacteria</taxon>
        <taxon>Pseudomonadati</taxon>
        <taxon>Pseudomonadota</taxon>
        <taxon>Gammaproteobacteria</taxon>
        <taxon>Enterobacterales</taxon>
        <taxon>Yersiniaceae</taxon>
        <taxon>Yersinia</taxon>
    </lineage>
</organism>